<protein>
    <recommendedName>
        <fullName evidence="1">Small ribosomal subunit protein uS5</fullName>
    </recommendedName>
    <alternativeName>
        <fullName evidence="2">30S ribosomal protein S5</fullName>
    </alternativeName>
</protein>
<keyword id="KW-1185">Reference proteome</keyword>
<keyword id="KW-0687">Ribonucleoprotein</keyword>
<keyword id="KW-0689">Ribosomal protein</keyword>
<keyword id="KW-0694">RNA-binding</keyword>
<keyword id="KW-0699">rRNA-binding</keyword>
<proteinExistence type="inferred from homology"/>
<organism>
    <name type="scientific">Azorhizobium caulinodans (strain ATCC 43989 / DSM 5975 / JCM 20966 / LMG 6465 / NBRC 14845 / NCIMB 13405 / ORS 571)</name>
    <dbReference type="NCBI Taxonomy" id="438753"/>
    <lineage>
        <taxon>Bacteria</taxon>
        <taxon>Pseudomonadati</taxon>
        <taxon>Pseudomonadota</taxon>
        <taxon>Alphaproteobacteria</taxon>
        <taxon>Hyphomicrobiales</taxon>
        <taxon>Xanthobacteraceae</taxon>
        <taxon>Azorhizobium</taxon>
    </lineage>
</organism>
<evidence type="ECO:0000255" key="1">
    <source>
        <dbReference type="HAMAP-Rule" id="MF_01307"/>
    </source>
</evidence>
<evidence type="ECO:0000305" key="2"/>
<comment type="function">
    <text evidence="1">With S4 and S12 plays an important role in translational accuracy.</text>
</comment>
<comment type="function">
    <text evidence="1">Located at the back of the 30S subunit body where it stabilizes the conformation of the head with respect to the body.</text>
</comment>
<comment type="subunit">
    <text evidence="1">Part of the 30S ribosomal subunit. Contacts proteins S4 and S8.</text>
</comment>
<comment type="domain">
    <text>The N-terminal domain interacts with the head of the 30S subunit; the C-terminal domain interacts with the body and contacts protein S4. The interaction surface between S4 and S5 is involved in control of translational fidelity.</text>
</comment>
<comment type="similarity">
    <text evidence="1">Belongs to the universal ribosomal protein uS5 family.</text>
</comment>
<reference key="1">
    <citation type="submission" date="2007-04" db="EMBL/GenBank/DDBJ databases">
        <title>Complete genome sequence of the nitrogen-fixing bacterium Azorhizobium caulinodans ORS571.</title>
        <authorList>
            <person name="Lee K.B."/>
            <person name="Backer P.D."/>
            <person name="Aono T."/>
            <person name="Liu C.T."/>
            <person name="Suzuki S."/>
            <person name="Suzuki T."/>
            <person name="Kaneko T."/>
            <person name="Yamada M."/>
            <person name="Tabata S."/>
            <person name="Kupfer D.M."/>
            <person name="Najar F.Z."/>
            <person name="Wiley G.B."/>
            <person name="Roe B."/>
            <person name="Binnewies T."/>
            <person name="Ussery D."/>
            <person name="Vereecke D."/>
            <person name="Gevers D."/>
            <person name="Holsters M."/>
            <person name="Oyaizu H."/>
        </authorList>
    </citation>
    <scope>NUCLEOTIDE SEQUENCE [LARGE SCALE GENOMIC DNA]</scope>
    <source>
        <strain>ATCC 43989 / DSM 5975 / JCM 20966 / LMG 6465 / NBRC 14845 / NCIMB 13405 / ORS 571</strain>
    </source>
</reference>
<feature type="chain" id="PRO_0000323069" description="Small ribosomal subunit protein uS5">
    <location>
        <begin position="1"/>
        <end position="185"/>
    </location>
</feature>
<feature type="domain" description="S5 DRBM" evidence="1">
    <location>
        <begin position="18"/>
        <end position="81"/>
    </location>
</feature>
<dbReference type="EMBL" id="AP009384">
    <property type="protein sequence ID" value="BAF88535.1"/>
    <property type="molecule type" value="Genomic_DNA"/>
</dbReference>
<dbReference type="RefSeq" id="WP_012171063.1">
    <property type="nucleotide sequence ID" value="NC_009937.1"/>
</dbReference>
<dbReference type="SMR" id="A8IAP6"/>
<dbReference type="STRING" id="438753.AZC_2537"/>
<dbReference type="KEGG" id="azc:AZC_2537"/>
<dbReference type="eggNOG" id="COG0098">
    <property type="taxonomic scope" value="Bacteria"/>
</dbReference>
<dbReference type="HOGENOM" id="CLU_065898_2_2_5"/>
<dbReference type="Proteomes" id="UP000000270">
    <property type="component" value="Chromosome"/>
</dbReference>
<dbReference type="GO" id="GO:0015935">
    <property type="term" value="C:small ribosomal subunit"/>
    <property type="evidence" value="ECO:0007669"/>
    <property type="project" value="InterPro"/>
</dbReference>
<dbReference type="GO" id="GO:0019843">
    <property type="term" value="F:rRNA binding"/>
    <property type="evidence" value="ECO:0007669"/>
    <property type="project" value="UniProtKB-UniRule"/>
</dbReference>
<dbReference type="GO" id="GO:0003735">
    <property type="term" value="F:structural constituent of ribosome"/>
    <property type="evidence" value="ECO:0007669"/>
    <property type="project" value="InterPro"/>
</dbReference>
<dbReference type="GO" id="GO:0006412">
    <property type="term" value="P:translation"/>
    <property type="evidence" value="ECO:0007669"/>
    <property type="project" value="UniProtKB-UniRule"/>
</dbReference>
<dbReference type="FunFam" id="3.30.160.20:FF:000001">
    <property type="entry name" value="30S ribosomal protein S5"/>
    <property type="match status" value="1"/>
</dbReference>
<dbReference type="FunFam" id="3.30.230.10:FF:000002">
    <property type="entry name" value="30S ribosomal protein S5"/>
    <property type="match status" value="1"/>
</dbReference>
<dbReference type="Gene3D" id="3.30.160.20">
    <property type="match status" value="1"/>
</dbReference>
<dbReference type="Gene3D" id="3.30.230.10">
    <property type="match status" value="1"/>
</dbReference>
<dbReference type="HAMAP" id="MF_01307_B">
    <property type="entry name" value="Ribosomal_uS5_B"/>
    <property type="match status" value="1"/>
</dbReference>
<dbReference type="InterPro" id="IPR020568">
    <property type="entry name" value="Ribosomal_Su5_D2-typ_SF"/>
</dbReference>
<dbReference type="InterPro" id="IPR000851">
    <property type="entry name" value="Ribosomal_uS5"/>
</dbReference>
<dbReference type="InterPro" id="IPR005712">
    <property type="entry name" value="Ribosomal_uS5_bac-type"/>
</dbReference>
<dbReference type="InterPro" id="IPR005324">
    <property type="entry name" value="Ribosomal_uS5_C"/>
</dbReference>
<dbReference type="InterPro" id="IPR013810">
    <property type="entry name" value="Ribosomal_uS5_N"/>
</dbReference>
<dbReference type="InterPro" id="IPR018192">
    <property type="entry name" value="Ribosomal_uS5_N_CS"/>
</dbReference>
<dbReference type="InterPro" id="IPR014721">
    <property type="entry name" value="Ribsml_uS5_D2-typ_fold_subgr"/>
</dbReference>
<dbReference type="NCBIfam" id="TIGR01021">
    <property type="entry name" value="rpsE_bact"/>
    <property type="match status" value="1"/>
</dbReference>
<dbReference type="PANTHER" id="PTHR48277">
    <property type="entry name" value="MITOCHONDRIAL RIBOSOMAL PROTEIN S5"/>
    <property type="match status" value="1"/>
</dbReference>
<dbReference type="PANTHER" id="PTHR48277:SF1">
    <property type="entry name" value="MITOCHONDRIAL RIBOSOMAL PROTEIN S5"/>
    <property type="match status" value="1"/>
</dbReference>
<dbReference type="Pfam" id="PF00333">
    <property type="entry name" value="Ribosomal_S5"/>
    <property type="match status" value="1"/>
</dbReference>
<dbReference type="Pfam" id="PF03719">
    <property type="entry name" value="Ribosomal_S5_C"/>
    <property type="match status" value="1"/>
</dbReference>
<dbReference type="SUPFAM" id="SSF54768">
    <property type="entry name" value="dsRNA-binding domain-like"/>
    <property type="match status" value="1"/>
</dbReference>
<dbReference type="SUPFAM" id="SSF54211">
    <property type="entry name" value="Ribosomal protein S5 domain 2-like"/>
    <property type="match status" value="1"/>
</dbReference>
<dbReference type="PROSITE" id="PS00585">
    <property type="entry name" value="RIBOSOMAL_S5"/>
    <property type="match status" value="1"/>
</dbReference>
<dbReference type="PROSITE" id="PS50881">
    <property type="entry name" value="S5_DSRBD"/>
    <property type="match status" value="1"/>
</dbReference>
<gene>
    <name evidence="1" type="primary">rpsE</name>
    <name type="ordered locus">AZC_2537</name>
</gene>
<accession>A8IAP6</accession>
<name>RS5_AZOC5</name>
<sequence length="185" mass="20223">MARDREHRAEREDRDNTFVDKLVHINRVAKVVKGGRRFGFAALVIVGDQKGRVGFGHGKAREVPEAIRKATESAKRALIRVPLREGRTLHHDVHGHHGAGKVILRAAPAGTGIIAGGPMRAVFETLGVHDVVAKSFGSSNPYNMVRATFDALTNQDSPRSVAARRGLKVSQLQSRRRVEDAEATD</sequence>